<feature type="chain" id="PRO_1000214740" description="Large ribosomal subunit protein uL16">
    <location>
        <begin position="1"/>
        <end position="136"/>
    </location>
</feature>
<proteinExistence type="inferred from homology"/>
<protein>
    <recommendedName>
        <fullName evidence="1">Large ribosomal subunit protein uL16</fullName>
    </recommendedName>
    <alternativeName>
        <fullName evidence="2">50S ribosomal protein L16</fullName>
    </alternativeName>
</protein>
<organism>
    <name type="scientific">Pectobacterium carotovorum subsp. carotovorum (strain PC1)</name>
    <dbReference type="NCBI Taxonomy" id="561230"/>
    <lineage>
        <taxon>Bacteria</taxon>
        <taxon>Pseudomonadati</taxon>
        <taxon>Pseudomonadota</taxon>
        <taxon>Gammaproteobacteria</taxon>
        <taxon>Enterobacterales</taxon>
        <taxon>Pectobacteriaceae</taxon>
        <taxon>Pectobacterium</taxon>
    </lineage>
</organism>
<evidence type="ECO:0000255" key="1">
    <source>
        <dbReference type="HAMAP-Rule" id="MF_01342"/>
    </source>
</evidence>
<evidence type="ECO:0000305" key="2"/>
<accession>C6DG67</accession>
<reference key="1">
    <citation type="submission" date="2009-07" db="EMBL/GenBank/DDBJ databases">
        <title>Complete sequence of Pectobacterium carotovorum subsp. carotovorum PC1.</title>
        <authorList>
            <consortium name="US DOE Joint Genome Institute"/>
            <person name="Lucas S."/>
            <person name="Copeland A."/>
            <person name="Lapidus A."/>
            <person name="Glavina del Rio T."/>
            <person name="Tice H."/>
            <person name="Bruce D."/>
            <person name="Goodwin L."/>
            <person name="Pitluck S."/>
            <person name="Munk A.C."/>
            <person name="Brettin T."/>
            <person name="Detter J.C."/>
            <person name="Han C."/>
            <person name="Tapia R."/>
            <person name="Larimer F."/>
            <person name="Land M."/>
            <person name="Hauser L."/>
            <person name="Kyrpides N."/>
            <person name="Mikhailova N."/>
            <person name="Balakrishnan V."/>
            <person name="Glasner J."/>
            <person name="Perna N.T."/>
        </authorList>
    </citation>
    <scope>NUCLEOTIDE SEQUENCE [LARGE SCALE GENOMIC DNA]</scope>
    <source>
        <strain>PC1</strain>
    </source>
</reference>
<sequence length="136" mass="15321">MLQPKRTKFRKVHKGRNRGLAQGTDVSFGTFGLKAVGRGRLTARQIEAARRAMTRAVKRQGKIWIRVFPDKPITEKPLEVRMGKGKGNVEYWVALIQPGKVLYEMDGVPEELAREAFQLAAAKLPIKTTFVTKTVM</sequence>
<dbReference type="EMBL" id="CP001657">
    <property type="protein sequence ID" value="ACT14830.1"/>
    <property type="molecule type" value="Genomic_DNA"/>
</dbReference>
<dbReference type="RefSeq" id="WP_005970273.1">
    <property type="nucleotide sequence ID" value="NC_012917.1"/>
</dbReference>
<dbReference type="SMR" id="C6DG67"/>
<dbReference type="STRING" id="561230.PC1_3815"/>
<dbReference type="GeneID" id="93391973"/>
<dbReference type="KEGG" id="pct:PC1_3815"/>
<dbReference type="eggNOG" id="COG0197">
    <property type="taxonomic scope" value="Bacteria"/>
</dbReference>
<dbReference type="HOGENOM" id="CLU_078858_2_1_6"/>
<dbReference type="OrthoDB" id="9802589at2"/>
<dbReference type="Proteomes" id="UP000002736">
    <property type="component" value="Chromosome"/>
</dbReference>
<dbReference type="GO" id="GO:0022625">
    <property type="term" value="C:cytosolic large ribosomal subunit"/>
    <property type="evidence" value="ECO:0007669"/>
    <property type="project" value="TreeGrafter"/>
</dbReference>
<dbReference type="GO" id="GO:0019843">
    <property type="term" value="F:rRNA binding"/>
    <property type="evidence" value="ECO:0007669"/>
    <property type="project" value="UniProtKB-UniRule"/>
</dbReference>
<dbReference type="GO" id="GO:0003735">
    <property type="term" value="F:structural constituent of ribosome"/>
    <property type="evidence" value="ECO:0007669"/>
    <property type="project" value="InterPro"/>
</dbReference>
<dbReference type="GO" id="GO:0000049">
    <property type="term" value="F:tRNA binding"/>
    <property type="evidence" value="ECO:0007669"/>
    <property type="project" value="UniProtKB-KW"/>
</dbReference>
<dbReference type="GO" id="GO:0006412">
    <property type="term" value="P:translation"/>
    <property type="evidence" value="ECO:0007669"/>
    <property type="project" value="UniProtKB-UniRule"/>
</dbReference>
<dbReference type="CDD" id="cd01433">
    <property type="entry name" value="Ribosomal_L16_L10e"/>
    <property type="match status" value="1"/>
</dbReference>
<dbReference type="FunFam" id="3.90.1170.10:FF:000001">
    <property type="entry name" value="50S ribosomal protein L16"/>
    <property type="match status" value="1"/>
</dbReference>
<dbReference type="Gene3D" id="3.90.1170.10">
    <property type="entry name" value="Ribosomal protein L10e/L16"/>
    <property type="match status" value="1"/>
</dbReference>
<dbReference type="HAMAP" id="MF_01342">
    <property type="entry name" value="Ribosomal_uL16"/>
    <property type="match status" value="1"/>
</dbReference>
<dbReference type="InterPro" id="IPR047873">
    <property type="entry name" value="Ribosomal_uL16"/>
</dbReference>
<dbReference type="InterPro" id="IPR000114">
    <property type="entry name" value="Ribosomal_uL16_bact-type"/>
</dbReference>
<dbReference type="InterPro" id="IPR020798">
    <property type="entry name" value="Ribosomal_uL16_CS"/>
</dbReference>
<dbReference type="InterPro" id="IPR016180">
    <property type="entry name" value="Ribosomal_uL16_dom"/>
</dbReference>
<dbReference type="InterPro" id="IPR036920">
    <property type="entry name" value="Ribosomal_uL16_sf"/>
</dbReference>
<dbReference type="NCBIfam" id="TIGR01164">
    <property type="entry name" value="rplP_bact"/>
    <property type="match status" value="1"/>
</dbReference>
<dbReference type="PANTHER" id="PTHR12220">
    <property type="entry name" value="50S/60S RIBOSOMAL PROTEIN L16"/>
    <property type="match status" value="1"/>
</dbReference>
<dbReference type="PANTHER" id="PTHR12220:SF13">
    <property type="entry name" value="LARGE RIBOSOMAL SUBUNIT PROTEIN UL16M"/>
    <property type="match status" value="1"/>
</dbReference>
<dbReference type="Pfam" id="PF00252">
    <property type="entry name" value="Ribosomal_L16"/>
    <property type="match status" value="1"/>
</dbReference>
<dbReference type="PRINTS" id="PR00060">
    <property type="entry name" value="RIBOSOMALL16"/>
</dbReference>
<dbReference type="SUPFAM" id="SSF54686">
    <property type="entry name" value="Ribosomal protein L16p/L10e"/>
    <property type="match status" value="1"/>
</dbReference>
<dbReference type="PROSITE" id="PS00586">
    <property type="entry name" value="RIBOSOMAL_L16_1"/>
    <property type="match status" value="1"/>
</dbReference>
<dbReference type="PROSITE" id="PS00701">
    <property type="entry name" value="RIBOSOMAL_L16_2"/>
    <property type="match status" value="1"/>
</dbReference>
<gene>
    <name evidence="1" type="primary">rplP</name>
    <name type="ordered locus">PC1_3815</name>
</gene>
<name>RL16_PECCP</name>
<comment type="function">
    <text evidence="1">Binds 23S rRNA and is also seen to make contacts with the A and possibly P site tRNAs.</text>
</comment>
<comment type="subunit">
    <text evidence="1">Part of the 50S ribosomal subunit.</text>
</comment>
<comment type="similarity">
    <text evidence="1">Belongs to the universal ribosomal protein uL16 family.</text>
</comment>
<keyword id="KW-0687">Ribonucleoprotein</keyword>
<keyword id="KW-0689">Ribosomal protein</keyword>
<keyword id="KW-0694">RNA-binding</keyword>
<keyword id="KW-0699">rRNA-binding</keyword>
<keyword id="KW-0820">tRNA-binding</keyword>